<organism>
    <name type="scientific">Desulfitobacterium hafniense (strain DSM 10664 / DCB-2)</name>
    <dbReference type="NCBI Taxonomy" id="272564"/>
    <lineage>
        <taxon>Bacteria</taxon>
        <taxon>Bacillati</taxon>
        <taxon>Bacillota</taxon>
        <taxon>Clostridia</taxon>
        <taxon>Eubacteriales</taxon>
        <taxon>Desulfitobacteriaceae</taxon>
        <taxon>Desulfitobacterium</taxon>
    </lineage>
</organism>
<keyword id="KW-1003">Cell membrane</keyword>
<keyword id="KW-0472">Membrane</keyword>
<keyword id="KW-0520">NAD</keyword>
<keyword id="KW-0874">Quinone</keyword>
<keyword id="KW-1278">Translocase</keyword>
<keyword id="KW-0812">Transmembrane</keyword>
<keyword id="KW-1133">Transmembrane helix</keyword>
<keyword id="KW-0813">Transport</keyword>
<proteinExistence type="inferred from homology"/>
<dbReference type="EC" id="7.1.1.-" evidence="1"/>
<dbReference type="EMBL" id="CP001336">
    <property type="protein sequence ID" value="ACL21757.1"/>
    <property type="molecule type" value="Genomic_DNA"/>
</dbReference>
<dbReference type="RefSeq" id="WP_015944759.1">
    <property type="nucleotide sequence ID" value="NC_011830.1"/>
</dbReference>
<dbReference type="SMR" id="B8FRJ7"/>
<dbReference type="KEGG" id="dhd:Dhaf_3741"/>
<dbReference type="HOGENOM" id="CLU_007100_1_5_9"/>
<dbReference type="Proteomes" id="UP000007726">
    <property type="component" value="Chromosome"/>
</dbReference>
<dbReference type="GO" id="GO:0005886">
    <property type="term" value="C:plasma membrane"/>
    <property type="evidence" value="ECO:0007669"/>
    <property type="project" value="UniProtKB-SubCell"/>
</dbReference>
<dbReference type="GO" id="GO:0008137">
    <property type="term" value="F:NADH dehydrogenase (ubiquinone) activity"/>
    <property type="evidence" value="ECO:0007669"/>
    <property type="project" value="InterPro"/>
</dbReference>
<dbReference type="GO" id="GO:0050136">
    <property type="term" value="F:NADH:ubiquinone reductase (non-electrogenic) activity"/>
    <property type="evidence" value="ECO:0007669"/>
    <property type="project" value="UniProtKB-UniRule"/>
</dbReference>
<dbReference type="GO" id="GO:0048038">
    <property type="term" value="F:quinone binding"/>
    <property type="evidence" value="ECO:0007669"/>
    <property type="project" value="UniProtKB-KW"/>
</dbReference>
<dbReference type="GO" id="GO:0042773">
    <property type="term" value="P:ATP synthesis coupled electron transport"/>
    <property type="evidence" value="ECO:0007669"/>
    <property type="project" value="InterPro"/>
</dbReference>
<dbReference type="HAMAP" id="MF_00445">
    <property type="entry name" value="NDH1_NuoN_1"/>
    <property type="match status" value="1"/>
</dbReference>
<dbReference type="InterPro" id="IPR010096">
    <property type="entry name" value="NADH-Q_OxRdtase_suN/2"/>
</dbReference>
<dbReference type="InterPro" id="IPR001750">
    <property type="entry name" value="ND/Mrp_TM"/>
</dbReference>
<dbReference type="NCBIfam" id="TIGR01770">
    <property type="entry name" value="NDH_I_N"/>
    <property type="match status" value="1"/>
</dbReference>
<dbReference type="PANTHER" id="PTHR22773">
    <property type="entry name" value="NADH DEHYDROGENASE"/>
    <property type="match status" value="1"/>
</dbReference>
<dbReference type="Pfam" id="PF00361">
    <property type="entry name" value="Proton_antipo_M"/>
    <property type="match status" value="2"/>
</dbReference>
<comment type="function">
    <text evidence="1">NDH-1 shuttles electrons from NADH, via FMN and iron-sulfur (Fe-S) centers, to quinones in the respiratory chain. The immediate electron acceptor for the enzyme in this species is believed to be a menaquinone. Couples the redox reaction to proton translocation (for every two electrons transferred, four hydrogen ions are translocated across the cytoplasmic membrane), and thus conserves the redox energy in a proton gradient.</text>
</comment>
<comment type="catalytic activity">
    <reaction evidence="1">
        <text>a quinone + NADH + 5 H(+)(in) = a quinol + NAD(+) + 4 H(+)(out)</text>
        <dbReference type="Rhea" id="RHEA:57888"/>
        <dbReference type="ChEBI" id="CHEBI:15378"/>
        <dbReference type="ChEBI" id="CHEBI:24646"/>
        <dbReference type="ChEBI" id="CHEBI:57540"/>
        <dbReference type="ChEBI" id="CHEBI:57945"/>
        <dbReference type="ChEBI" id="CHEBI:132124"/>
    </reaction>
</comment>
<comment type="subunit">
    <text evidence="1">NDH-1 is composed of 14 different subunits. Subunits NuoA, H, J, K, L, M, N constitute the membrane sector of the complex.</text>
</comment>
<comment type="subcellular location">
    <subcellularLocation>
        <location evidence="1">Cell membrane</location>
        <topology evidence="1">Multi-pass membrane protein</topology>
    </subcellularLocation>
</comment>
<comment type="similarity">
    <text evidence="1">Belongs to the complex I subunit 2 family.</text>
</comment>
<name>NUON_DESHD</name>
<gene>
    <name evidence="1" type="primary">nuoN</name>
    <name type="ordered locus">Dhaf_3741</name>
</gene>
<evidence type="ECO:0000255" key="1">
    <source>
        <dbReference type="HAMAP-Rule" id="MF_00445"/>
    </source>
</evidence>
<accession>B8FRJ7</accession>
<reference key="1">
    <citation type="journal article" date="2012" name="BMC Microbiol.">
        <title>Genome sequence of Desulfitobacterium hafniense DCB-2, a Gram-positive anaerobe capable of dehalogenation and metal reduction.</title>
        <authorList>
            <person name="Kim S.H."/>
            <person name="Harzman C."/>
            <person name="Davis J.K."/>
            <person name="Hutcheson R."/>
            <person name="Broderick J.B."/>
            <person name="Marsh T.L."/>
            <person name="Tiedje J.M."/>
        </authorList>
    </citation>
    <scope>NUCLEOTIDE SEQUENCE [LARGE SCALE GENOMIC DNA]</scope>
    <source>
        <strain>DSM 10664 / DCB-2</strain>
    </source>
</reference>
<protein>
    <recommendedName>
        <fullName evidence="1">NADH-quinone oxidoreductase subunit N</fullName>
        <ecNumber evidence="1">7.1.1.-</ecNumber>
    </recommendedName>
    <alternativeName>
        <fullName evidence="1">NADH dehydrogenase I subunit N</fullName>
    </alternativeName>
    <alternativeName>
        <fullName evidence="1">NDH-1 subunit N</fullName>
    </alternativeName>
</protein>
<sequence length="496" mass="52941">MMSFELSLLSTEIIMAVLGLGLFAVGLILPRGSRQGMFPLTLFALLGTLAYAVYDFFYGGNAAFLQGMYMHDQFAGFFKILFLVAALLVVLSTKNYVAKFQAYRGEFYPLLLLAALGMMLMAGAGDLLTMYVGLELMTITFYILVAYHPNDPKSSEAGIKYLVLGAASSAVLLYGISLIYGLTGSTQMFTVAMSLGAEANTVTILATVMMLAGFGFKISLVPFHMWAPDIYEGAPAPITAFLATASKAAGFAALVRFYVLMMYNHSMAEAGLILLLVLAAITMIIGNLMAFPQKNIQRLMAYSGIAQAGYIIVGVIAVSIASSVSQWGVDPVSAFVDGIKGVLFYLMIYVFANLGAFAVITHVAQSQGSTEIKDYAGLAKRSPLAAAVLTLSVLSLAGIPPLAGFVGKFYLFSAVINQGHVWIAVIGFVMSMISVYYYLSIVKIMYLGDGEGLPEVPVHGAAKFGMIFSMIVTIVLGIYPTPLAQMALTAASSLVK</sequence>
<feature type="chain" id="PRO_0000391136" description="NADH-quinone oxidoreductase subunit N">
    <location>
        <begin position="1"/>
        <end position="496"/>
    </location>
</feature>
<feature type="transmembrane region" description="Helical" evidence="1">
    <location>
        <begin position="8"/>
        <end position="28"/>
    </location>
</feature>
<feature type="transmembrane region" description="Helical" evidence="1">
    <location>
        <begin position="37"/>
        <end position="57"/>
    </location>
</feature>
<feature type="transmembrane region" description="Helical" evidence="1">
    <location>
        <begin position="73"/>
        <end position="93"/>
    </location>
</feature>
<feature type="transmembrane region" description="Helical" evidence="1">
    <location>
        <begin position="110"/>
        <end position="130"/>
    </location>
</feature>
<feature type="transmembrane region" description="Helical" evidence="1">
    <location>
        <begin position="131"/>
        <end position="151"/>
    </location>
</feature>
<feature type="transmembrane region" description="Helical" evidence="1">
    <location>
        <begin position="162"/>
        <end position="182"/>
    </location>
</feature>
<feature type="transmembrane region" description="Helical" evidence="1">
    <location>
        <begin position="203"/>
        <end position="223"/>
    </location>
</feature>
<feature type="transmembrane region" description="Helical" evidence="1">
    <location>
        <begin position="235"/>
        <end position="255"/>
    </location>
</feature>
<feature type="transmembrane region" description="Helical" evidence="1">
    <location>
        <begin position="271"/>
        <end position="291"/>
    </location>
</feature>
<feature type="transmembrane region" description="Helical" evidence="1">
    <location>
        <begin position="300"/>
        <end position="320"/>
    </location>
</feature>
<feature type="transmembrane region" description="Helical" evidence="1">
    <location>
        <begin position="341"/>
        <end position="361"/>
    </location>
</feature>
<feature type="transmembrane region" description="Helical" evidence="1">
    <location>
        <begin position="386"/>
        <end position="406"/>
    </location>
</feature>
<feature type="transmembrane region" description="Helical" evidence="1">
    <location>
        <begin position="421"/>
        <end position="441"/>
    </location>
</feature>
<feature type="transmembrane region" description="Helical" evidence="1">
    <location>
        <begin position="464"/>
        <end position="484"/>
    </location>
</feature>